<dbReference type="EMBL" id="U15186">
    <property type="protein sequence ID" value="AAA63089.1"/>
    <property type="molecule type" value="Genomic_DNA"/>
</dbReference>
<dbReference type="EMBL" id="AL583920">
    <property type="protein sequence ID" value="CAC31528.1"/>
    <property type="molecule type" value="Genomic_DNA"/>
</dbReference>
<dbReference type="PIR" id="T09972">
    <property type="entry name" value="T09972"/>
</dbReference>
<dbReference type="RefSeq" id="NP_301841.1">
    <property type="nucleotide sequence ID" value="NC_002677.1"/>
</dbReference>
<dbReference type="RefSeq" id="WP_010908165.1">
    <property type="nucleotide sequence ID" value="NC_002677.1"/>
</dbReference>
<dbReference type="STRING" id="272631.gene:17574974"/>
<dbReference type="KEGG" id="mle:ML1147"/>
<dbReference type="PATRIC" id="fig|272631.5.peg.2069"/>
<dbReference type="Leproma" id="ML1147"/>
<dbReference type="eggNOG" id="ENOG50331I5">
    <property type="taxonomic scope" value="Bacteria"/>
</dbReference>
<dbReference type="HOGENOM" id="CLU_122300_0_1_11"/>
<dbReference type="OrthoDB" id="4793422at2"/>
<dbReference type="Proteomes" id="UP000000806">
    <property type="component" value="Chromosome"/>
</dbReference>
<dbReference type="GO" id="GO:0016020">
    <property type="term" value="C:membrane"/>
    <property type="evidence" value="ECO:0007669"/>
    <property type="project" value="UniProtKB-SubCell"/>
</dbReference>
<dbReference type="InterPro" id="IPR019675">
    <property type="entry name" value="DUF2550"/>
</dbReference>
<dbReference type="Pfam" id="PF10739">
    <property type="entry name" value="DUF2550"/>
    <property type="match status" value="1"/>
</dbReference>
<comment type="subcellular location">
    <subcellularLocation>
        <location evidence="2">Membrane</location>
        <topology evidence="2">Single-pass membrane protein</topology>
    </subcellularLocation>
</comment>
<comment type="similarity">
    <text evidence="2">To M.tuberculosis Rv1312.</text>
</comment>
<organism>
    <name type="scientific">Mycobacterium leprae (strain TN)</name>
    <dbReference type="NCBI Taxonomy" id="272631"/>
    <lineage>
        <taxon>Bacteria</taxon>
        <taxon>Bacillati</taxon>
        <taxon>Actinomycetota</taxon>
        <taxon>Actinomycetes</taxon>
        <taxon>Mycobacteriales</taxon>
        <taxon>Mycobacteriaceae</taxon>
        <taxon>Mycobacterium</taxon>
    </lineage>
</organism>
<protein>
    <recommendedName>
        <fullName>Uncharacterized protein ML1147</fullName>
    </recommendedName>
</protein>
<evidence type="ECO:0000255" key="1"/>
<evidence type="ECO:0000305" key="2"/>
<sequence length="147" mass="16518">MSAPMVGMVVLVVTLGAAVLALSYRLWKLRQGGTAGIMRDIPAVGGHGWRHGVIRYRGEAAAFYRLSSLRLWPDRRLSRRGVEIVARRGPRGDEFDIMTDKIVVLELRDTTQDRRSGYEIALDQGALAAFLSWLESRPSPRTRRRSV</sequence>
<accession>P53432</accession>
<proteinExistence type="predicted"/>
<keyword id="KW-0472">Membrane</keyword>
<keyword id="KW-1185">Reference proteome</keyword>
<keyword id="KW-0812">Transmembrane</keyword>
<keyword id="KW-1133">Transmembrane helix</keyword>
<reference key="1">
    <citation type="submission" date="1994-09" db="EMBL/GenBank/DDBJ databases">
        <authorList>
            <person name="Smith D.R."/>
            <person name="Robison K."/>
        </authorList>
    </citation>
    <scope>NUCLEOTIDE SEQUENCE [GENOMIC DNA]</scope>
</reference>
<reference key="2">
    <citation type="journal article" date="2001" name="Nature">
        <title>Massive gene decay in the leprosy bacillus.</title>
        <authorList>
            <person name="Cole S.T."/>
            <person name="Eiglmeier K."/>
            <person name="Parkhill J."/>
            <person name="James K.D."/>
            <person name="Thomson N.R."/>
            <person name="Wheeler P.R."/>
            <person name="Honore N."/>
            <person name="Garnier T."/>
            <person name="Churcher C.M."/>
            <person name="Harris D.E."/>
            <person name="Mungall K.L."/>
            <person name="Basham D."/>
            <person name="Brown D."/>
            <person name="Chillingworth T."/>
            <person name="Connor R."/>
            <person name="Davies R.M."/>
            <person name="Devlin K."/>
            <person name="Duthoy S."/>
            <person name="Feltwell T."/>
            <person name="Fraser A."/>
            <person name="Hamlin N."/>
            <person name="Holroyd S."/>
            <person name="Hornsby T."/>
            <person name="Jagels K."/>
            <person name="Lacroix C."/>
            <person name="Maclean J."/>
            <person name="Moule S."/>
            <person name="Murphy L.D."/>
            <person name="Oliver K."/>
            <person name="Quail M.A."/>
            <person name="Rajandream M.A."/>
            <person name="Rutherford K.M."/>
            <person name="Rutter S."/>
            <person name="Seeger K."/>
            <person name="Simon S."/>
            <person name="Simmonds M."/>
            <person name="Skelton J."/>
            <person name="Squares R."/>
            <person name="Squares S."/>
            <person name="Stevens K."/>
            <person name="Taylor K."/>
            <person name="Whitehead S."/>
            <person name="Woodward J.R."/>
            <person name="Barrell B.G."/>
        </authorList>
    </citation>
    <scope>NUCLEOTIDE SEQUENCE [LARGE SCALE GENOMIC DNA]</scope>
    <source>
        <strain>TN</strain>
    </source>
</reference>
<name>Y1147_MYCLE</name>
<gene>
    <name type="ordered locus">ML1147</name>
    <name type="ORF">u471b</name>
</gene>
<feature type="chain" id="PRO_0000103797" description="Uncharacterized protein ML1147">
    <location>
        <begin position="1"/>
        <end position="147"/>
    </location>
</feature>
<feature type="transmembrane region" description="Helical" evidence="1">
    <location>
        <begin position="3"/>
        <end position="23"/>
    </location>
</feature>